<feature type="chain" id="PRO_0000245052" description="Nucleoprotein">
    <location>
        <begin position="1"/>
        <end position="739"/>
    </location>
</feature>
<feature type="region of interest" description="Disordered" evidence="3">
    <location>
        <begin position="414"/>
        <end position="475"/>
    </location>
</feature>
<feature type="region of interest" description="Disordered" evidence="3">
    <location>
        <begin position="493"/>
        <end position="641"/>
    </location>
</feature>
<feature type="coiled-coil region" evidence="2">
    <location>
        <begin position="334"/>
        <end position="363"/>
    </location>
</feature>
<feature type="compositionally biased region" description="Polar residues" evidence="3">
    <location>
        <begin position="531"/>
        <end position="546"/>
    </location>
</feature>
<feature type="compositionally biased region" description="Acidic residues" evidence="3">
    <location>
        <begin position="570"/>
        <end position="579"/>
    </location>
</feature>
<feature type="compositionally biased region" description="Basic and acidic residues" evidence="3">
    <location>
        <begin position="614"/>
        <end position="624"/>
    </location>
</feature>
<feature type="compositionally biased region" description="Polar residues" evidence="3">
    <location>
        <begin position="625"/>
        <end position="634"/>
    </location>
</feature>
<feature type="sequence variant" description="In strain: Isolate Pennsylvania-89.">
    <original>G</original>
    <variation>V</variation>
    <location>
        <position position="28"/>
    </location>
</feature>
<feature type="sequence variant" description="In strain: Isolate Pennsylvania-89.">
    <original>Q</original>
    <variation>R</variation>
    <location>
        <position position="67"/>
    </location>
</feature>
<feature type="sequence variant" description="In strain: Isolate Pennsylvania-89.">
    <original>R</original>
    <variation>G</variation>
    <location>
        <position position="373"/>
    </location>
</feature>
<feature type="sequence variant" description="In strain: Isolate Pennsylvania-89.">
    <original>L</original>
    <variation>W</variation>
    <location>
        <position position="483"/>
    </location>
</feature>
<feature type="sequence variant" description="In strain: Isolate Pennsylvania-89.">
    <original>I</original>
    <variation>T</variation>
    <location>
        <position position="517"/>
    </location>
</feature>
<feature type="sequence variant" description="In strain: Isolate Pennsylvania-89.">
    <original>F</original>
    <variation>S</variation>
    <location>
        <position position="721"/>
    </location>
</feature>
<feature type="helix" evidence="6">
    <location>
        <begin position="645"/>
        <end position="658"/>
    </location>
</feature>
<feature type="helix" evidence="6">
    <location>
        <begin position="661"/>
        <end position="672"/>
    </location>
</feature>
<feature type="strand" evidence="6">
    <location>
        <begin position="676"/>
        <end position="679"/>
    </location>
</feature>
<feature type="strand" evidence="6">
    <location>
        <begin position="685"/>
        <end position="688"/>
    </location>
</feature>
<feature type="helix" evidence="6">
    <location>
        <begin position="690"/>
        <end position="692"/>
    </location>
</feature>
<feature type="strand" evidence="6">
    <location>
        <begin position="693"/>
        <end position="696"/>
    </location>
</feature>
<feature type="helix" evidence="6">
    <location>
        <begin position="704"/>
        <end position="706"/>
    </location>
</feature>
<feature type="helix" evidence="6">
    <location>
        <begin position="708"/>
        <end position="711"/>
    </location>
</feature>
<feature type="strand" evidence="6">
    <location>
        <begin position="712"/>
        <end position="715"/>
    </location>
</feature>
<feature type="strand" evidence="6">
    <location>
        <begin position="718"/>
        <end position="721"/>
    </location>
</feature>
<feature type="helix" evidence="6">
    <location>
        <begin position="722"/>
        <end position="724"/>
    </location>
</feature>
<feature type="helix" evidence="6">
    <location>
        <begin position="727"/>
        <end position="737"/>
    </location>
</feature>
<keyword id="KW-0002">3D-structure</keyword>
<keyword id="KW-0167">Capsid protein</keyword>
<keyword id="KW-0175">Coiled coil</keyword>
<keyword id="KW-1139">Helical capsid protein</keyword>
<keyword id="KW-1035">Host cytoplasm</keyword>
<keyword id="KW-0597">Phosphoprotein</keyword>
<keyword id="KW-0687">Ribonucleoprotein</keyword>
<keyword id="KW-0694">RNA-binding</keyword>
<keyword id="KW-0543">Viral nucleoprotein</keyword>
<keyword id="KW-0946">Virion</keyword>
<gene>
    <name type="primary">NP</name>
</gene>
<organism>
    <name type="scientific">Reston ebolavirus (strain Reston-89)</name>
    <name type="common">REBOV</name>
    <name type="synonym">Reston Ebola virus</name>
    <dbReference type="NCBI Taxonomy" id="386032"/>
    <lineage>
        <taxon>Viruses</taxon>
        <taxon>Riboviria</taxon>
        <taxon>Orthornavirae</taxon>
        <taxon>Negarnaviricota</taxon>
        <taxon>Haploviricotina</taxon>
        <taxon>Monjiviricetes</taxon>
        <taxon>Mononegavirales</taxon>
        <taxon>Filoviridae</taxon>
        <taxon>Orthoebolavirus</taxon>
        <taxon>Orthoebolavirus restonense</taxon>
        <taxon>Reston ebolavirus</taxon>
    </lineage>
</organism>
<evidence type="ECO:0000250" key="1">
    <source>
        <dbReference type="UniProtKB" id="P18272"/>
    </source>
</evidence>
<evidence type="ECO:0000255" key="2"/>
<evidence type="ECO:0000256" key="3">
    <source>
        <dbReference type="SAM" id="MobiDB-lite"/>
    </source>
</evidence>
<evidence type="ECO:0000305" key="4"/>
<evidence type="ECO:0007744" key="5">
    <source>
        <dbReference type="PDB" id="5W2B"/>
    </source>
</evidence>
<evidence type="ECO:0007829" key="6">
    <source>
        <dbReference type="PDB" id="5W2B"/>
    </source>
</evidence>
<comment type="function">
    <text evidence="1">Oligomerizes into helical capsid to encapsidate the viral genome, protecting it from nucleases and the cellular innate immune response. VP35 binds to and stabilizes monomeric NP, keeping it soluble. Upon virus replication, NP is recruited to bind cooperatively viral genomic RNA and VP35 is released. The encapsidated genomic RNA is termed the nucleocapsid and serves as template for transcription and replication. The nucleocapsid is helical with a pitch of 10.81 NP per turn and a diameter of about 22nm. Each NP binds to six nucleotides of viral genomic RNA, three being exposed to the solvant and three hidden into the nucleocapsid. Also recruits host PPP2R5C phosphatase to dephosphorylate VP30 and thereby promote viral transcription. Upon virion assembly and budding, NP binds to VP24 and possibly host STAU1.</text>
</comment>
<comment type="subunit">
    <text evidence="1">Homooligomer. Homomultimerizes to form the nucleocapsid. Binds to viral genomic RNA. Interacts with VP35 and VP30 to form the nucleocapsid. Interacts with host PPP2R5C; this interaction leads to VP30 dephosphorylation and viral transcription. Interacts with VP24; this interaction facilitates nucleocapsid assembly and genome packaging. Interacts with matrix protein VP40; this interaction allows recruitment of the nucleocapsid into progeny virions. Interacts with host STAU1. Interacts with host NXF1 (via RNA-binding domain); this interaction recruits NXF1 to the inclusion bodies were viral replication takes place, probably to export viral mRNA-NXF1 complexes from these sites. Interacts with host CCDC92; this interaction sequesters NP in the host cytoplasm. Interacts with host TRIM14.</text>
</comment>
<comment type="subcellular location">
    <subcellularLocation>
        <location evidence="1">Virion</location>
    </subcellularLocation>
    <subcellularLocation>
        <location evidence="1">Host cytoplasm</location>
    </subcellularLocation>
</comment>
<comment type="domain">
    <text evidence="1">Comprizes a N-terminal arm involved in oligomerization, a NP core region involved in RNA binding, a disordered region follwoed by a C-terminal tail involved in protein-protein interactions. During oligomerization, NP N-terminal arm binds to a neighbor NP thereby displacing VP35 bound to monomeric NP.</text>
</comment>
<comment type="PTM">
    <text evidence="1">Phosphorylated and O-glycosylated by host. Acetylated by host EP300 in vitro.</text>
</comment>
<comment type="similarity">
    <text evidence="4">Belongs to the filoviruses nucleoprotein family.</text>
</comment>
<sequence>MDRGTRRIWVSQNQGDTDLDYHKILTAGLTVQQGIVRQKIISVYLVDNLEAMCQLVIQAFEAGIDFQENADSFLLMLCLHHAYQGDYKLFLESNAVQYLEGHGFKFELRKKDGVNRLEELLPAATSGKNIRRTLAALPEEETTEANAGQFLSFASLFLPKLVVGEKACLEKVQRQIQVHAEQGLIQYPTAWQSVGHMMVIFRLMRTNFLIKYLLIHQGMHMVAGHDANDAVIANSVAQARFSGLLIVKTVLDHILQKTDQGVRLHPLARTAKVRNEVNAFKAALSSLAKHGEYAPFARLLNLSGVNNLEHGLYPQLSAIALGVATAHGSTLAGVNVGEQYQQLREAATEAEKQLQQYAESRELDSLGLDDQERRILMNFHQKKNEISFQQTNAMVTLRKERLAKLTEAITLASRPNLGSRQDDGNEIPFPGPISNNPDQDHLEDDPRDSRDTIIPNGAIDPEDGDFENYNGYHDDEVGTAGDLVLFDLDDHEDDNKAFEPQDSSPQSQREIERERLIHPPPGNNKDDNRASDNNQQSADSEEQGGQYNWHRGPERTTANRRLSPVHEEDTLMDQGDDDPSSLPPLESDDDDASSSQQDPDYTAVAPPAPVYRSAEAHEPPHKSSNEPAETSQLNEDPDIGQSKSMQKLEETYHHLLRTQGPFEAINYYHMMKDEPVIFSTDDGKEYTYPDSLEEAYPPWLTEKERLDKENRYIYINNQQFFWPVMSPRDKFLAILQHHQ</sequence>
<organismHost>
    <name type="scientific">Epomops franqueti</name>
    <name type="common">Franquet's epauletted fruit bat</name>
    <name type="synonym">Epomophorus franqueti</name>
    <dbReference type="NCBI Taxonomy" id="77231"/>
</organismHost>
<organismHost>
    <name type="scientific">Homo sapiens</name>
    <name type="common">Human</name>
    <dbReference type="NCBI Taxonomy" id="9606"/>
</organismHost>
<organismHost>
    <name type="scientific">Myonycteris torquata</name>
    <name type="common">Little collared fruit bat</name>
    <dbReference type="NCBI Taxonomy" id="77243"/>
</organismHost>
<organismHost>
    <name type="scientific">Sus scrofa</name>
    <name type="common">Pig</name>
    <dbReference type="NCBI Taxonomy" id="9823"/>
</organismHost>
<protein>
    <recommendedName>
        <fullName>Nucleoprotein</fullName>
    </recommendedName>
    <alternativeName>
        <fullName>Nucleocapsid protein</fullName>
        <shortName>Protein N</shortName>
    </alternativeName>
    <alternativeName>
        <fullName>Reston NP</fullName>
        <shortName>rNP</shortName>
    </alternativeName>
</protein>
<name>NCAP_EBORR</name>
<reference key="1">
    <citation type="journal article" date="2002" name="Virus Res.">
        <title>Molecular characterization of an isolate from the 1989/90 epizootic of Ebola virus Reston among macaques imported into the United States.</title>
        <authorList>
            <person name="Groseth A."/>
            <person name="Stroeher U."/>
            <person name="Theriault S."/>
            <person name="Feldmann H."/>
        </authorList>
    </citation>
    <scope>NUCLEOTIDE SEQUENCE [GENOMIC RNA]</scope>
</reference>
<reference key="2">
    <citation type="journal article" date="2005" name="Virology">
        <title>A reconstituted replication and transcription system for Ebola virus Reston and comparison with Ebola virus Zaire.</title>
        <authorList>
            <person name="Boehmann Y."/>
            <person name="Enterlein S."/>
            <person name="Randolf A."/>
            <person name="Muehlberger E.I."/>
        </authorList>
    </citation>
    <scope>NUCLEOTIDE SEQUENCE [GENOMIC RNA]</scope>
    <source>
        <strain>Isolate Pennsylvania-89</strain>
    </source>
</reference>
<reference evidence="5" key="3">
    <citation type="submission" date="2017-06" db="PDB data bank">
        <title>Crystal structure of C-terminal domain of Ebola (Reston) nucleoprotein in complex with Fab fragment.</title>
        <authorList>
            <person name="Radwanska M.J."/>
            <person name="Derewenda U."/>
            <person name="Kossiakoff A.A."/>
            <person name="Derewenda Z.S."/>
        </authorList>
    </citation>
    <scope>X-RAY CRYSTALLOGRAPHY (2.25 ANGSTROMS) OF 641-739</scope>
</reference>
<accession>Q8JPY1</accession>
<accession>Q5UAL1</accession>
<dbReference type="EMBL" id="AF522874">
    <property type="protein sequence ID" value="AAN04448.1"/>
    <property type="molecule type" value="Genomic_RNA"/>
</dbReference>
<dbReference type="EMBL" id="AY769362">
    <property type="protein sequence ID" value="AAV48574.1"/>
    <property type="molecule type" value="Genomic_RNA"/>
</dbReference>
<dbReference type="RefSeq" id="NP_690580.1">
    <property type="nucleotide sequence ID" value="NC_004161.1"/>
</dbReference>
<dbReference type="PDB" id="5W2B">
    <property type="method" value="X-ray"/>
    <property type="resolution" value="2.25 A"/>
    <property type="chains" value="A=641-739"/>
</dbReference>
<dbReference type="PDBsum" id="5W2B"/>
<dbReference type="SMR" id="Q8JPY1"/>
<dbReference type="IntAct" id="Q8JPY1">
    <property type="interactions" value="1"/>
</dbReference>
<dbReference type="ABCD" id="Q8JPY1">
    <property type="antibodies" value="2 sequenced antibodies"/>
</dbReference>
<dbReference type="GeneID" id="955194"/>
<dbReference type="KEGG" id="vg:955194"/>
<dbReference type="Proteomes" id="UP000007207">
    <property type="component" value="Segment"/>
</dbReference>
<dbReference type="Proteomes" id="UP000138664">
    <property type="component" value="Genome"/>
</dbReference>
<dbReference type="GO" id="GO:0019029">
    <property type="term" value="C:helical viral capsid"/>
    <property type="evidence" value="ECO:0007669"/>
    <property type="project" value="UniProtKB-KW"/>
</dbReference>
<dbReference type="GO" id="GO:0030430">
    <property type="term" value="C:host cell cytoplasm"/>
    <property type="evidence" value="ECO:0007669"/>
    <property type="project" value="UniProtKB-SubCell"/>
</dbReference>
<dbReference type="GO" id="GO:1990904">
    <property type="term" value="C:ribonucleoprotein complex"/>
    <property type="evidence" value="ECO:0007669"/>
    <property type="project" value="UniProtKB-KW"/>
</dbReference>
<dbReference type="GO" id="GO:0019013">
    <property type="term" value="C:viral nucleocapsid"/>
    <property type="evidence" value="ECO:0000314"/>
    <property type="project" value="CACAO"/>
</dbReference>
<dbReference type="GO" id="GO:0003723">
    <property type="term" value="F:RNA binding"/>
    <property type="evidence" value="ECO:0007669"/>
    <property type="project" value="UniProtKB-KW"/>
</dbReference>
<dbReference type="GO" id="GO:0019074">
    <property type="term" value="P:viral RNA genome packaging"/>
    <property type="evidence" value="ECO:0007669"/>
    <property type="project" value="InterPro"/>
</dbReference>
<dbReference type="InterPro" id="IPR008609">
    <property type="entry name" value="Ebola_NP"/>
</dbReference>
<dbReference type="Pfam" id="PF05505">
    <property type="entry name" value="Ebola_NP"/>
    <property type="match status" value="1"/>
</dbReference>
<dbReference type="PIRSF" id="PIRSF003900">
    <property type="entry name" value="N_FiloV"/>
    <property type="match status" value="1"/>
</dbReference>
<proteinExistence type="evidence at protein level"/>